<organism>
    <name type="scientific">Campylobacter hominis (strain ATCC BAA-381 / DSM 21671 / CCUG 45161 / LMG 19568 / NCTC 13146 / CH001A)</name>
    <dbReference type="NCBI Taxonomy" id="360107"/>
    <lineage>
        <taxon>Bacteria</taxon>
        <taxon>Pseudomonadati</taxon>
        <taxon>Campylobacterota</taxon>
        <taxon>Epsilonproteobacteria</taxon>
        <taxon>Campylobacterales</taxon>
        <taxon>Campylobacteraceae</taxon>
        <taxon>Campylobacter</taxon>
    </lineage>
</organism>
<accession>A7I0V6</accession>
<reference key="1">
    <citation type="submission" date="2007-07" db="EMBL/GenBank/DDBJ databases">
        <title>Complete genome sequence of Campylobacter hominis ATCC BAA-381, a commensal isolated from the human gastrointestinal tract.</title>
        <authorList>
            <person name="Fouts D.E."/>
            <person name="Mongodin E.F."/>
            <person name="Puiu D."/>
            <person name="Sebastian Y."/>
            <person name="Miller W.G."/>
            <person name="Mandrell R.E."/>
            <person name="Nelson K.E."/>
        </authorList>
    </citation>
    <scope>NUCLEOTIDE SEQUENCE [LARGE SCALE GENOMIC DNA]</scope>
    <source>
        <strain>ATCC BAA-381 / DSM 21671 / CCUG 45161 / LMG 19568 / NCTC 13146 / CH001A</strain>
    </source>
</reference>
<keyword id="KW-0143">Chaperone</keyword>
<keyword id="KW-0963">Cytoplasm</keyword>
<keyword id="KW-1185">Reference proteome</keyword>
<keyword id="KW-0690">Ribosome biogenesis</keyword>
<keyword id="KW-0698">rRNA processing</keyword>
<evidence type="ECO:0000255" key="1">
    <source>
        <dbReference type="HAMAP-Rule" id="MF_00014"/>
    </source>
</evidence>
<gene>
    <name evidence="1" type="primary">rimM</name>
    <name type="ordered locus">CHAB381_0559</name>
</gene>
<proteinExistence type="inferred from homology"/>
<name>RIMM_CAMHC</name>
<feature type="chain" id="PRO_1000001158" description="Ribosome maturation factor RimM">
    <location>
        <begin position="1"/>
        <end position="176"/>
    </location>
</feature>
<feature type="domain" description="PRC barrel" evidence="1">
    <location>
        <begin position="94"/>
        <end position="176"/>
    </location>
</feature>
<comment type="function">
    <text evidence="1">An accessory protein needed during the final step in the assembly of 30S ribosomal subunit, possibly for assembly of the head region. Essential for efficient processing of 16S rRNA. May be needed both before and after RbfA during the maturation of 16S rRNA. It has affinity for free ribosomal 30S subunits but not for 70S ribosomes.</text>
</comment>
<comment type="subunit">
    <text evidence="1">Binds ribosomal protein uS19.</text>
</comment>
<comment type="subcellular location">
    <subcellularLocation>
        <location evidence="1">Cytoplasm</location>
    </subcellularLocation>
</comment>
<comment type="domain">
    <text evidence="1">The PRC barrel domain binds ribosomal protein uS19.</text>
</comment>
<comment type="similarity">
    <text evidence="1">Belongs to the RimM family.</text>
</comment>
<protein>
    <recommendedName>
        <fullName evidence="1">Ribosome maturation factor RimM</fullName>
    </recommendedName>
</protein>
<dbReference type="EMBL" id="CP000776">
    <property type="protein sequence ID" value="ABS50989.1"/>
    <property type="molecule type" value="Genomic_DNA"/>
</dbReference>
<dbReference type="RefSeq" id="WP_012108434.1">
    <property type="nucleotide sequence ID" value="NC_009714.1"/>
</dbReference>
<dbReference type="SMR" id="A7I0V6"/>
<dbReference type="STRING" id="360107.CHAB381_0559"/>
<dbReference type="KEGG" id="cha:CHAB381_0559"/>
<dbReference type="eggNOG" id="COG0806">
    <property type="taxonomic scope" value="Bacteria"/>
</dbReference>
<dbReference type="HOGENOM" id="CLU_077636_2_0_7"/>
<dbReference type="OrthoDB" id="9810331at2"/>
<dbReference type="Proteomes" id="UP000002407">
    <property type="component" value="Chromosome"/>
</dbReference>
<dbReference type="GO" id="GO:0005737">
    <property type="term" value="C:cytoplasm"/>
    <property type="evidence" value="ECO:0007669"/>
    <property type="project" value="UniProtKB-SubCell"/>
</dbReference>
<dbReference type="GO" id="GO:0005840">
    <property type="term" value="C:ribosome"/>
    <property type="evidence" value="ECO:0007669"/>
    <property type="project" value="InterPro"/>
</dbReference>
<dbReference type="GO" id="GO:0043022">
    <property type="term" value="F:ribosome binding"/>
    <property type="evidence" value="ECO:0007669"/>
    <property type="project" value="InterPro"/>
</dbReference>
<dbReference type="GO" id="GO:0042274">
    <property type="term" value="P:ribosomal small subunit biogenesis"/>
    <property type="evidence" value="ECO:0007669"/>
    <property type="project" value="UniProtKB-UniRule"/>
</dbReference>
<dbReference type="GO" id="GO:0006364">
    <property type="term" value="P:rRNA processing"/>
    <property type="evidence" value="ECO:0007669"/>
    <property type="project" value="UniProtKB-UniRule"/>
</dbReference>
<dbReference type="Gene3D" id="2.30.30.240">
    <property type="entry name" value="PRC-barrel domain"/>
    <property type="match status" value="1"/>
</dbReference>
<dbReference type="Gene3D" id="2.40.30.60">
    <property type="entry name" value="RimM"/>
    <property type="match status" value="1"/>
</dbReference>
<dbReference type="HAMAP" id="MF_00014">
    <property type="entry name" value="Ribosome_mat_RimM"/>
    <property type="match status" value="1"/>
</dbReference>
<dbReference type="InterPro" id="IPR027275">
    <property type="entry name" value="PRC-brl_dom"/>
</dbReference>
<dbReference type="InterPro" id="IPR011033">
    <property type="entry name" value="PRC_barrel-like_sf"/>
</dbReference>
<dbReference type="InterPro" id="IPR011961">
    <property type="entry name" value="RimM"/>
</dbReference>
<dbReference type="InterPro" id="IPR002676">
    <property type="entry name" value="RimM_N"/>
</dbReference>
<dbReference type="InterPro" id="IPR036976">
    <property type="entry name" value="RimM_N_sf"/>
</dbReference>
<dbReference type="InterPro" id="IPR009000">
    <property type="entry name" value="Transl_B-barrel_sf"/>
</dbReference>
<dbReference type="NCBIfam" id="TIGR02273">
    <property type="entry name" value="16S_RimM"/>
    <property type="match status" value="1"/>
</dbReference>
<dbReference type="PANTHER" id="PTHR33692">
    <property type="entry name" value="RIBOSOME MATURATION FACTOR RIMM"/>
    <property type="match status" value="1"/>
</dbReference>
<dbReference type="PANTHER" id="PTHR33692:SF1">
    <property type="entry name" value="RIBOSOME MATURATION FACTOR RIMM"/>
    <property type="match status" value="1"/>
</dbReference>
<dbReference type="Pfam" id="PF05239">
    <property type="entry name" value="PRC"/>
    <property type="match status" value="1"/>
</dbReference>
<dbReference type="Pfam" id="PF01782">
    <property type="entry name" value="RimM"/>
    <property type="match status" value="1"/>
</dbReference>
<dbReference type="SUPFAM" id="SSF50346">
    <property type="entry name" value="PRC-barrel domain"/>
    <property type="match status" value="1"/>
</dbReference>
<dbReference type="SUPFAM" id="SSF50447">
    <property type="entry name" value="Translation proteins"/>
    <property type="match status" value="1"/>
</dbReference>
<sequence length="176" mass="20286">MLKDDMLEVALLGKTIGLKGAIKLHNRSDFPSQFKKGAKFYLTDGEILEILSFNKTNFVAVFKNYENIECAAKLTNKILYQSKEITKKTCKLGKDEFFYFEILGLEVFENEEKLGKVADIFEAGNFVFEIATDEKLIKKGFPKIFYLPYTDHFIDKISIEEGKIFSRFGFEILQNS</sequence>